<evidence type="ECO:0000255" key="1">
    <source>
        <dbReference type="HAMAP-Rule" id="MF_00315"/>
    </source>
</evidence>
<gene>
    <name evidence="1" type="primary">dxs</name>
    <name type="ordered locus">MAB_2990c</name>
</gene>
<comment type="function">
    <text evidence="1">Catalyzes the acyloin condensation reaction between C atoms 2 and 3 of pyruvate and glyceraldehyde 3-phosphate to yield 1-deoxy-D-xylulose-5-phosphate (DXP).</text>
</comment>
<comment type="catalytic activity">
    <reaction evidence="1">
        <text>D-glyceraldehyde 3-phosphate + pyruvate + H(+) = 1-deoxy-D-xylulose 5-phosphate + CO2</text>
        <dbReference type="Rhea" id="RHEA:12605"/>
        <dbReference type="ChEBI" id="CHEBI:15361"/>
        <dbReference type="ChEBI" id="CHEBI:15378"/>
        <dbReference type="ChEBI" id="CHEBI:16526"/>
        <dbReference type="ChEBI" id="CHEBI:57792"/>
        <dbReference type="ChEBI" id="CHEBI:59776"/>
        <dbReference type="EC" id="2.2.1.7"/>
    </reaction>
</comment>
<comment type="cofactor">
    <cofactor evidence="1">
        <name>Mg(2+)</name>
        <dbReference type="ChEBI" id="CHEBI:18420"/>
    </cofactor>
    <text evidence="1">Binds 1 Mg(2+) ion per subunit.</text>
</comment>
<comment type="cofactor">
    <cofactor evidence="1">
        <name>thiamine diphosphate</name>
        <dbReference type="ChEBI" id="CHEBI:58937"/>
    </cofactor>
    <text evidence="1">Binds 1 thiamine pyrophosphate per subunit.</text>
</comment>
<comment type="pathway">
    <text evidence="1">Metabolic intermediate biosynthesis; 1-deoxy-D-xylulose 5-phosphate biosynthesis; 1-deoxy-D-xylulose 5-phosphate from D-glyceraldehyde 3-phosphate and pyruvate: step 1/1.</text>
</comment>
<comment type="subunit">
    <text evidence="1">Homodimer.</text>
</comment>
<comment type="similarity">
    <text evidence="1">Belongs to the transketolase family. DXPS subfamily.</text>
</comment>
<protein>
    <recommendedName>
        <fullName evidence="1">1-deoxy-D-xylulose-5-phosphate synthase</fullName>
        <ecNumber evidence="1">2.2.1.7</ecNumber>
    </recommendedName>
    <alternativeName>
        <fullName evidence="1">1-deoxyxylulose-5-phosphate synthase</fullName>
        <shortName evidence="1">DXP synthase</shortName>
        <shortName evidence="1">DXPS</shortName>
    </alternativeName>
</protein>
<feature type="chain" id="PRO_1000115751" description="1-deoxy-D-xylulose-5-phosphate synthase">
    <location>
        <begin position="1"/>
        <end position="641"/>
    </location>
</feature>
<feature type="binding site" evidence="1">
    <location>
        <position position="71"/>
    </location>
    <ligand>
        <name>thiamine diphosphate</name>
        <dbReference type="ChEBI" id="CHEBI:58937"/>
    </ligand>
</feature>
<feature type="binding site" evidence="1">
    <location>
        <begin position="112"/>
        <end position="114"/>
    </location>
    <ligand>
        <name>thiamine diphosphate</name>
        <dbReference type="ChEBI" id="CHEBI:58937"/>
    </ligand>
</feature>
<feature type="binding site" evidence="1">
    <location>
        <position position="144"/>
    </location>
    <ligand>
        <name>Mg(2+)</name>
        <dbReference type="ChEBI" id="CHEBI:18420"/>
    </ligand>
</feature>
<feature type="binding site" evidence="1">
    <location>
        <begin position="145"/>
        <end position="146"/>
    </location>
    <ligand>
        <name>thiamine diphosphate</name>
        <dbReference type="ChEBI" id="CHEBI:58937"/>
    </ligand>
</feature>
<feature type="binding site" evidence="1">
    <location>
        <position position="174"/>
    </location>
    <ligand>
        <name>Mg(2+)</name>
        <dbReference type="ChEBI" id="CHEBI:18420"/>
    </ligand>
</feature>
<feature type="binding site" evidence="1">
    <location>
        <position position="174"/>
    </location>
    <ligand>
        <name>thiamine diphosphate</name>
        <dbReference type="ChEBI" id="CHEBI:58937"/>
    </ligand>
</feature>
<feature type="binding site" evidence="1">
    <location>
        <position position="285"/>
    </location>
    <ligand>
        <name>thiamine diphosphate</name>
        <dbReference type="ChEBI" id="CHEBI:58937"/>
    </ligand>
</feature>
<feature type="binding site" evidence="1">
    <location>
        <position position="366"/>
    </location>
    <ligand>
        <name>thiamine diphosphate</name>
        <dbReference type="ChEBI" id="CHEBI:58937"/>
    </ligand>
</feature>
<sequence>MLDDIRGPGDLQGLSKRELDLLADEIREFLIHKVAATGGHLGPNLGVVELSLALHRVFESPYDPIIFDTGHQAYVHKILTGRAGDFDTLRQKDGLSGYPSRAESEHDWVESSHASTALSYADGLAKAFELTGQRRRHVVAVVGDGAMTGGMCWEALNNIAAAEHRRIIIVVNDNGRSYAPTIGGLASHLAGLRLTPSYEKVLDESKKLLRGMPVVGPLAYALMHSLKVGVKDAVSPQVMFTDLGLKYVGPVDGHDEHAVEDALRRARGYGGPVIVHVITRKGMGYAPAEDDEAEQMHSTGIIDPKTGRAIKASAPGWTSVFSDALIDVASEHRNIVAITAAMPGPTGLSKFGERFPDRLFDVGIAEQHAVTSAAGLAMGGLHPVVAIYSTFLNRAFDQVMMDVALHRLPVTFVLDRAGITGSDGASHNGMWDLSILNVVPGMRVAAPRDASRLREELTEALAVDDGPTALRFPKGEVGEDIPAIERRDGVDILARPASGLHADVLLVAVGSFASTALATADRLGKQGIGVTVVDPRWVLPVPPHVVELAGQHRLVVTLEDSGVHGGAGSAVTAAMQDADVDIPSRDIGVPQQFLEHASRGQVLEELGLTDQHIARKITGWVAAMSREIGDSTVNPAAQQVD</sequence>
<keyword id="KW-0414">Isoprene biosynthesis</keyword>
<keyword id="KW-0460">Magnesium</keyword>
<keyword id="KW-0479">Metal-binding</keyword>
<keyword id="KW-1185">Reference proteome</keyword>
<keyword id="KW-0784">Thiamine biosynthesis</keyword>
<keyword id="KW-0786">Thiamine pyrophosphate</keyword>
<keyword id="KW-0808">Transferase</keyword>
<organism>
    <name type="scientific">Mycobacteroides abscessus (strain ATCC 19977 / DSM 44196 / CCUG 20993 / CIP 104536 / JCM 13569 / NCTC 13031 / TMC 1543 / L948)</name>
    <name type="common">Mycobacterium abscessus</name>
    <dbReference type="NCBI Taxonomy" id="561007"/>
    <lineage>
        <taxon>Bacteria</taxon>
        <taxon>Bacillati</taxon>
        <taxon>Actinomycetota</taxon>
        <taxon>Actinomycetes</taxon>
        <taxon>Mycobacteriales</taxon>
        <taxon>Mycobacteriaceae</taxon>
        <taxon>Mycobacteroides</taxon>
        <taxon>Mycobacteroides abscessus</taxon>
    </lineage>
</organism>
<proteinExistence type="inferred from homology"/>
<reference key="1">
    <citation type="journal article" date="2009" name="PLoS ONE">
        <title>Non mycobacterial virulence genes in the genome of the emerging pathogen Mycobacterium abscessus.</title>
        <authorList>
            <person name="Ripoll F."/>
            <person name="Pasek S."/>
            <person name="Schenowitz C."/>
            <person name="Dossat C."/>
            <person name="Barbe V."/>
            <person name="Rottman M."/>
            <person name="Macheras E."/>
            <person name="Heym B."/>
            <person name="Herrmann J.L."/>
            <person name="Daffe M."/>
            <person name="Brosch R."/>
            <person name="Risler J.L."/>
            <person name="Gaillard J.L."/>
        </authorList>
    </citation>
    <scope>NUCLEOTIDE SEQUENCE [LARGE SCALE GENOMIC DNA]</scope>
    <source>
        <strain>ATCC 19977 / DSM 44196 / CCUG 20993 / CIP 104536 / JCM 13569 / NCTC 13031 / TMC 1543 / L948</strain>
    </source>
</reference>
<dbReference type="EC" id="2.2.1.7" evidence="1"/>
<dbReference type="EMBL" id="CU458896">
    <property type="protein sequence ID" value="CAM63068.1"/>
    <property type="molecule type" value="Genomic_DNA"/>
</dbReference>
<dbReference type="RefSeq" id="WP_005081956.1">
    <property type="nucleotide sequence ID" value="NZ_MLCG01000003.1"/>
</dbReference>
<dbReference type="SMR" id="B1MCU7"/>
<dbReference type="GeneID" id="93379923"/>
<dbReference type="KEGG" id="mab:MAB_2990c"/>
<dbReference type="UniPathway" id="UPA00064">
    <property type="reaction ID" value="UER00091"/>
</dbReference>
<dbReference type="Proteomes" id="UP000007137">
    <property type="component" value="Chromosome"/>
</dbReference>
<dbReference type="GO" id="GO:0005829">
    <property type="term" value="C:cytosol"/>
    <property type="evidence" value="ECO:0007669"/>
    <property type="project" value="TreeGrafter"/>
</dbReference>
<dbReference type="GO" id="GO:0008661">
    <property type="term" value="F:1-deoxy-D-xylulose-5-phosphate synthase activity"/>
    <property type="evidence" value="ECO:0007669"/>
    <property type="project" value="UniProtKB-UniRule"/>
</dbReference>
<dbReference type="GO" id="GO:0000287">
    <property type="term" value="F:magnesium ion binding"/>
    <property type="evidence" value="ECO:0007669"/>
    <property type="project" value="UniProtKB-UniRule"/>
</dbReference>
<dbReference type="GO" id="GO:0030976">
    <property type="term" value="F:thiamine pyrophosphate binding"/>
    <property type="evidence" value="ECO:0007669"/>
    <property type="project" value="UniProtKB-UniRule"/>
</dbReference>
<dbReference type="GO" id="GO:0052865">
    <property type="term" value="P:1-deoxy-D-xylulose 5-phosphate biosynthetic process"/>
    <property type="evidence" value="ECO:0007669"/>
    <property type="project" value="UniProtKB-UniPathway"/>
</dbReference>
<dbReference type="GO" id="GO:0019288">
    <property type="term" value="P:isopentenyl diphosphate biosynthetic process, methylerythritol 4-phosphate pathway"/>
    <property type="evidence" value="ECO:0007669"/>
    <property type="project" value="TreeGrafter"/>
</dbReference>
<dbReference type="GO" id="GO:0016114">
    <property type="term" value="P:terpenoid biosynthetic process"/>
    <property type="evidence" value="ECO:0007669"/>
    <property type="project" value="UniProtKB-UniRule"/>
</dbReference>
<dbReference type="GO" id="GO:0009228">
    <property type="term" value="P:thiamine biosynthetic process"/>
    <property type="evidence" value="ECO:0007669"/>
    <property type="project" value="UniProtKB-UniRule"/>
</dbReference>
<dbReference type="CDD" id="cd02007">
    <property type="entry name" value="TPP_DXS"/>
    <property type="match status" value="1"/>
</dbReference>
<dbReference type="CDD" id="cd07033">
    <property type="entry name" value="TPP_PYR_DXS_TK_like"/>
    <property type="match status" value="1"/>
</dbReference>
<dbReference type="FunFam" id="3.40.50.920:FF:000002">
    <property type="entry name" value="1-deoxy-D-xylulose-5-phosphate synthase"/>
    <property type="match status" value="1"/>
</dbReference>
<dbReference type="FunFam" id="3.40.50.970:FF:000005">
    <property type="entry name" value="1-deoxy-D-xylulose-5-phosphate synthase"/>
    <property type="match status" value="1"/>
</dbReference>
<dbReference type="Gene3D" id="3.40.50.920">
    <property type="match status" value="1"/>
</dbReference>
<dbReference type="Gene3D" id="3.40.50.970">
    <property type="match status" value="2"/>
</dbReference>
<dbReference type="HAMAP" id="MF_00315">
    <property type="entry name" value="DXP_synth"/>
    <property type="match status" value="1"/>
</dbReference>
<dbReference type="InterPro" id="IPR005477">
    <property type="entry name" value="Dxylulose-5-P_synthase"/>
</dbReference>
<dbReference type="InterPro" id="IPR029061">
    <property type="entry name" value="THDP-binding"/>
</dbReference>
<dbReference type="InterPro" id="IPR009014">
    <property type="entry name" value="Transketo_C/PFOR_II"/>
</dbReference>
<dbReference type="InterPro" id="IPR005475">
    <property type="entry name" value="Transketolase-like_Pyr-bd"/>
</dbReference>
<dbReference type="InterPro" id="IPR020826">
    <property type="entry name" value="Transketolase_BS"/>
</dbReference>
<dbReference type="InterPro" id="IPR033248">
    <property type="entry name" value="Transketolase_C"/>
</dbReference>
<dbReference type="InterPro" id="IPR049557">
    <property type="entry name" value="Transketolase_CS"/>
</dbReference>
<dbReference type="NCBIfam" id="TIGR00204">
    <property type="entry name" value="dxs"/>
    <property type="match status" value="1"/>
</dbReference>
<dbReference type="NCBIfam" id="NF003933">
    <property type="entry name" value="PRK05444.2-2"/>
    <property type="match status" value="1"/>
</dbReference>
<dbReference type="PANTHER" id="PTHR43322">
    <property type="entry name" value="1-D-DEOXYXYLULOSE 5-PHOSPHATE SYNTHASE-RELATED"/>
    <property type="match status" value="1"/>
</dbReference>
<dbReference type="PANTHER" id="PTHR43322:SF5">
    <property type="entry name" value="1-DEOXY-D-XYLULOSE-5-PHOSPHATE SYNTHASE, CHLOROPLASTIC"/>
    <property type="match status" value="1"/>
</dbReference>
<dbReference type="Pfam" id="PF13292">
    <property type="entry name" value="DXP_synthase_N"/>
    <property type="match status" value="1"/>
</dbReference>
<dbReference type="Pfam" id="PF02779">
    <property type="entry name" value="Transket_pyr"/>
    <property type="match status" value="1"/>
</dbReference>
<dbReference type="Pfam" id="PF02780">
    <property type="entry name" value="Transketolase_C"/>
    <property type="match status" value="1"/>
</dbReference>
<dbReference type="SMART" id="SM00861">
    <property type="entry name" value="Transket_pyr"/>
    <property type="match status" value="1"/>
</dbReference>
<dbReference type="SUPFAM" id="SSF52518">
    <property type="entry name" value="Thiamin diphosphate-binding fold (THDP-binding)"/>
    <property type="match status" value="2"/>
</dbReference>
<dbReference type="SUPFAM" id="SSF52922">
    <property type="entry name" value="TK C-terminal domain-like"/>
    <property type="match status" value="1"/>
</dbReference>
<dbReference type="PROSITE" id="PS00801">
    <property type="entry name" value="TRANSKETOLASE_1"/>
    <property type="match status" value="1"/>
</dbReference>
<dbReference type="PROSITE" id="PS00802">
    <property type="entry name" value="TRANSKETOLASE_2"/>
    <property type="match status" value="1"/>
</dbReference>
<accession>B1MCU7</accession>
<name>DXS_MYCA9</name>